<keyword id="KW-1003">Cell membrane</keyword>
<keyword id="KW-0472">Membrane</keyword>
<keyword id="KW-0520">NAD</keyword>
<keyword id="KW-0874">Quinone</keyword>
<keyword id="KW-1185">Reference proteome</keyword>
<keyword id="KW-1278">Translocase</keyword>
<keyword id="KW-0812">Transmembrane</keyword>
<keyword id="KW-1133">Transmembrane helix</keyword>
<keyword id="KW-0813">Transport</keyword>
<comment type="function">
    <text evidence="1">NDH-1 shuttles electrons from NADH, via FMN and iron-sulfur (Fe-S) centers, to quinones in the respiratory chain. The immediate electron acceptor for the enzyme in this species is believed to be a menaquinone. Couples the redox reaction to proton translocation (for every two electrons transferred, four hydrogen ions are translocated across the cytoplasmic membrane), and thus conserves the redox energy in a proton gradient.</text>
</comment>
<comment type="catalytic activity">
    <reaction evidence="1">
        <text>a quinone + NADH + 5 H(+)(in) = a quinol + NAD(+) + 4 H(+)(out)</text>
        <dbReference type="Rhea" id="RHEA:57888"/>
        <dbReference type="ChEBI" id="CHEBI:15378"/>
        <dbReference type="ChEBI" id="CHEBI:24646"/>
        <dbReference type="ChEBI" id="CHEBI:57540"/>
        <dbReference type="ChEBI" id="CHEBI:57945"/>
        <dbReference type="ChEBI" id="CHEBI:132124"/>
    </reaction>
</comment>
<comment type="subunit">
    <text evidence="1">NDH-1 is composed of 14 different subunits. Subunits NuoA, H, J, K, L, M, N constitute the membrane sector of the complex.</text>
</comment>
<comment type="subcellular location">
    <subcellularLocation>
        <location evidence="1">Cell membrane</location>
        <topology evidence="1">Multi-pass membrane protein</topology>
    </subcellularLocation>
</comment>
<comment type="similarity">
    <text evidence="1">Belongs to the complex I subunit 4L family.</text>
</comment>
<gene>
    <name evidence="1" type="primary">nuoK</name>
    <name type="ordered locus">FRAAL1042</name>
</gene>
<name>NUOK_FRAAA</name>
<feature type="chain" id="PRO_0000390069" description="NADH-quinone oxidoreductase subunit K">
    <location>
        <begin position="1"/>
        <end position="99"/>
    </location>
</feature>
<feature type="transmembrane region" description="Helical" evidence="1">
    <location>
        <begin position="3"/>
        <end position="23"/>
    </location>
</feature>
<feature type="transmembrane region" description="Helical" evidence="1">
    <location>
        <begin position="28"/>
        <end position="48"/>
    </location>
</feature>
<feature type="transmembrane region" description="Helical" evidence="1">
    <location>
        <begin position="59"/>
        <end position="79"/>
    </location>
</feature>
<organism>
    <name type="scientific">Frankia alni (strain DSM 45986 / CECT 9034 / ACN14a)</name>
    <dbReference type="NCBI Taxonomy" id="326424"/>
    <lineage>
        <taxon>Bacteria</taxon>
        <taxon>Bacillati</taxon>
        <taxon>Actinomycetota</taxon>
        <taxon>Actinomycetes</taxon>
        <taxon>Frankiales</taxon>
        <taxon>Frankiaceae</taxon>
        <taxon>Frankia</taxon>
    </lineage>
</organism>
<dbReference type="EC" id="7.1.1.-" evidence="1"/>
<dbReference type="EMBL" id="CT573213">
    <property type="protein sequence ID" value="CAJ59707.1"/>
    <property type="molecule type" value="Genomic_DNA"/>
</dbReference>
<dbReference type="RefSeq" id="WP_011602269.1">
    <property type="nucleotide sequence ID" value="NC_008278.1"/>
</dbReference>
<dbReference type="SMR" id="Q0RRV8"/>
<dbReference type="STRING" id="326424.FRAAL1042"/>
<dbReference type="KEGG" id="fal:FRAAL1042"/>
<dbReference type="eggNOG" id="COG0713">
    <property type="taxonomic scope" value="Bacteria"/>
</dbReference>
<dbReference type="HOGENOM" id="CLU_144724_0_0_11"/>
<dbReference type="OrthoDB" id="9810120at2"/>
<dbReference type="Proteomes" id="UP000000657">
    <property type="component" value="Chromosome"/>
</dbReference>
<dbReference type="GO" id="GO:0030964">
    <property type="term" value="C:NADH dehydrogenase complex"/>
    <property type="evidence" value="ECO:0007669"/>
    <property type="project" value="TreeGrafter"/>
</dbReference>
<dbReference type="GO" id="GO:0005886">
    <property type="term" value="C:plasma membrane"/>
    <property type="evidence" value="ECO:0007669"/>
    <property type="project" value="UniProtKB-SubCell"/>
</dbReference>
<dbReference type="GO" id="GO:0050136">
    <property type="term" value="F:NADH:ubiquinone reductase (non-electrogenic) activity"/>
    <property type="evidence" value="ECO:0007669"/>
    <property type="project" value="UniProtKB-UniRule"/>
</dbReference>
<dbReference type="GO" id="GO:0048038">
    <property type="term" value="F:quinone binding"/>
    <property type="evidence" value="ECO:0007669"/>
    <property type="project" value="UniProtKB-KW"/>
</dbReference>
<dbReference type="GO" id="GO:0042773">
    <property type="term" value="P:ATP synthesis coupled electron transport"/>
    <property type="evidence" value="ECO:0007669"/>
    <property type="project" value="InterPro"/>
</dbReference>
<dbReference type="FunFam" id="1.10.287.3510:FF:000001">
    <property type="entry name" value="NADH-quinone oxidoreductase subunit K"/>
    <property type="match status" value="1"/>
</dbReference>
<dbReference type="Gene3D" id="1.10.287.3510">
    <property type="match status" value="1"/>
</dbReference>
<dbReference type="HAMAP" id="MF_01456">
    <property type="entry name" value="NDH1_NuoK"/>
    <property type="match status" value="1"/>
</dbReference>
<dbReference type="InterPro" id="IPR001133">
    <property type="entry name" value="NADH_UbQ_OxRdtase_chain4L/K"/>
</dbReference>
<dbReference type="InterPro" id="IPR039428">
    <property type="entry name" value="NUOK/Mnh_C1-like"/>
</dbReference>
<dbReference type="NCBIfam" id="NF004320">
    <property type="entry name" value="PRK05715.1-2"/>
    <property type="match status" value="1"/>
</dbReference>
<dbReference type="NCBIfam" id="NF004321">
    <property type="entry name" value="PRK05715.1-3"/>
    <property type="match status" value="1"/>
</dbReference>
<dbReference type="NCBIfam" id="NF004323">
    <property type="entry name" value="PRK05715.1-5"/>
    <property type="match status" value="1"/>
</dbReference>
<dbReference type="PANTHER" id="PTHR11434:SF21">
    <property type="entry name" value="NADH DEHYDROGENASE SUBUNIT 4L-RELATED"/>
    <property type="match status" value="1"/>
</dbReference>
<dbReference type="PANTHER" id="PTHR11434">
    <property type="entry name" value="NADH-UBIQUINONE OXIDOREDUCTASE SUBUNIT ND4L"/>
    <property type="match status" value="1"/>
</dbReference>
<dbReference type="Pfam" id="PF00420">
    <property type="entry name" value="Oxidored_q2"/>
    <property type="match status" value="1"/>
</dbReference>
<sequence>MNPANYLILSALLFTIGTVGVLVRRNAIVVFMSIELMLNAVNLTLVTFSRINGTLDGQVMAFFVMVVAAAEVVIGLAIILSIFRTRRSASVDDVNLLKY</sequence>
<accession>Q0RRV8</accession>
<proteinExistence type="inferred from homology"/>
<protein>
    <recommendedName>
        <fullName evidence="1">NADH-quinone oxidoreductase subunit K</fullName>
        <ecNumber evidence="1">7.1.1.-</ecNumber>
    </recommendedName>
    <alternativeName>
        <fullName evidence="1">NADH dehydrogenase I subunit K</fullName>
    </alternativeName>
    <alternativeName>
        <fullName evidence="1">NDH-1 subunit K</fullName>
    </alternativeName>
</protein>
<reference key="1">
    <citation type="journal article" date="2007" name="Genome Res.">
        <title>Genome characteristics of facultatively symbiotic Frankia sp. strains reflect host range and host plant biogeography.</title>
        <authorList>
            <person name="Normand P."/>
            <person name="Lapierre P."/>
            <person name="Tisa L.S."/>
            <person name="Gogarten J.P."/>
            <person name="Alloisio N."/>
            <person name="Bagnarol E."/>
            <person name="Bassi C.A."/>
            <person name="Berry A.M."/>
            <person name="Bickhart D.M."/>
            <person name="Choisne N."/>
            <person name="Couloux A."/>
            <person name="Cournoyer B."/>
            <person name="Cruveiller S."/>
            <person name="Daubin V."/>
            <person name="Demange N."/>
            <person name="Francino M.P."/>
            <person name="Goltsman E."/>
            <person name="Huang Y."/>
            <person name="Kopp O.R."/>
            <person name="Labarre L."/>
            <person name="Lapidus A."/>
            <person name="Lavire C."/>
            <person name="Marechal J."/>
            <person name="Martinez M."/>
            <person name="Mastronunzio J.E."/>
            <person name="Mullin B.C."/>
            <person name="Niemann J."/>
            <person name="Pujic P."/>
            <person name="Rawnsley T."/>
            <person name="Rouy Z."/>
            <person name="Schenowitz C."/>
            <person name="Sellstedt A."/>
            <person name="Tavares F."/>
            <person name="Tomkins J.P."/>
            <person name="Vallenet D."/>
            <person name="Valverde C."/>
            <person name="Wall L.G."/>
            <person name="Wang Y."/>
            <person name="Medigue C."/>
            <person name="Benson D.R."/>
        </authorList>
    </citation>
    <scope>NUCLEOTIDE SEQUENCE [LARGE SCALE GENOMIC DNA]</scope>
    <source>
        <strain>DSM 45986 / CECT 9034 / ACN14a</strain>
    </source>
</reference>
<evidence type="ECO:0000255" key="1">
    <source>
        <dbReference type="HAMAP-Rule" id="MF_01456"/>
    </source>
</evidence>